<keyword id="KW-0413">Isomerase</keyword>
<keyword id="KW-0460">Magnesium</keyword>
<keyword id="KW-0479">Metal-binding</keyword>
<keyword id="KW-0597">Phosphoprotein</keyword>
<sequence length="446" mass="49196">MKLFGTSGIRMKNLDPLIAYKVGFAISKNFKKAVIGRDTRTTGNLIESAITAGLLNGGCDVTILGIVPTPVLGFSAKSHDIGIMITASHNPPEYNGIKLFNNNGTSFTPNQEESLEEIIEKSDFLDPSWDIVGNVSEDKTAVKKYLDYILSNINIKKKFNVVVDCANAAACGISPNLFTNAGCKVISVNSHCDGRFVGRMPEPNEKNLVETVDIVKGLNLSGRDFIGIAHDGDADRMIAIDEMGRVTDFDKLLAAFCKYVVQKTNAKKIVTTVDASMAIEEYLKEFGAEVIRTKIGDVSVAYEIEKTGAIFGGEPSGTWIHKSIHLTPDGILSGLRVLEMMEFYDKRLCEIMDEVPSYINLREKLPCPDELKNKVMKYVSKEGKLLFKKEPETLDGVRFSFENGWILIRPSGTESYIRVRVEAKDETFANELLNNGISLVNNGILK</sequence>
<reference key="1">
    <citation type="submission" date="2007-06" db="EMBL/GenBank/DDBJ databases">
        <title>Complete sequence of Methanococcus vannielii SB.</title>
        <authorList>
            <consortium name="US DOE Joint Genome Institute"/>
            <person name="Copeland A."/>
            <person name="Lucas S."/>
            <person name="Lapidus A."/>
            <person name="Barry K."/>
            <person name="Glavina del Rio T."/>
            <person name="Dalin E."/>
            <person name="Tice H."/>
            <person name="Pitluck S."/>
            <person name="Chain P."/>
            <person name="Malfatti S."/>
            <person name="Shin M."/>
            <person name="Vergez L."/>
            <person name="Schmutz J."/>
            <person name="Larimer F."/>
            <person name="Land M."/>
            <person name="Hauser L."/>
            <person name="Kyrpides N."/>
            <person name="Anderson I."/>
            <person name="Sieprawska-Lupa M."/>
            <person name="Whitman W.B."/>
            <person name="Richardson P."/>
        </authorList>
    </citation>
    <scope>NUCLEOTIDE SEQUENCE [LARGE SCALE GENOMIC DNA]</scope>
    <source>
        <strain>ATCC 35089 / DSM 1224 / JCM 13029 / OCM 148 / SB</strain>
    </source>
</reference>
<proteinExistence type="inferred from homology"/>
<gene>
    <name evidence="1" type="primary">glmM</name>
    <name type="ordered locus">Mevan_0400</name>
</gene>
<comment type="function">
    <text evidence="1">Catalyzes the conversion of glucosamine-6-phosphate to glucosamine-1-phosphate.</text>
</comment>
<comment type="catalytic activity">
    <reaction evidence="1">
        <text>alpha-D-glucosamine 1-phosphate = D-glucosamine 6-phosphate</text>
        <dbReference type="Rhea" id="RHEA:23424"/>
        <dbReference type="ChEBI" id="CHEBI:58516"/>
        <dbReference type="ChEBI" id="CHEBI:58725"/>
        <dbReference type="EC" id="5.4.2.10"/>
    </reaction>
</comment>
<comment type="cofactor">
    <cofactor evidence="1">
        <name>Mg(2+)</name>
        <dbReference type="ChEBI" id="CHEBI:18420"/>
    </cofactor>
    <text evidence="1">Binds 1 Mg(2+) ion per subunit.</text>
</comment>
<comment type="PTM">
    <text evidence="1">Activated by phosphorylation.</text>
</comment>
<comment type="similarity">
    <text evidence="1">Belongs to the phosphohexose mutase family.</text>
</comment>
<organism>
    <name type="scientific">Methanococcus vannielii (strain ATCC 35089 / DSM 1224 / JCM 13029 / OCM 148 / SB)</name>
    <dbReference type="NCBI Taxonomy" id="406327"/>
    <lineage>
        <taxon>Archaea</taxon>
        <taxon>Methanobacteriati</taxon>
        <taxon>Methanobacteriota</taxon>
        <taxon>Methanomada group</taxon>
        <taxon>Methanococci</taxon>
        <taxon>Methanococcales</taxon>
        <taxon>Methanococcaceae</taxon>
        <taxon>Methanococcus</taxon>
    </lineage>
</organism>
<evidence type="ECO:0000255" key="1">
    <source>
        <dbReference type="HAMAP-Rule" id="MF_01554"/>
    </source>
</evidence>
<accession>A6UP86</accession>
<name>GLMM_METVS</name>
<feature type="chain" id="PRO_0000337816" description="Phosphoglucosamine mutase">
    <location>
        <begin position="1"/>
        <end position="446"/>
    </location>
</feature>
<feature type="active site" description="Phosphoserine intermediate" evidence="1">
    <location>
        <position position="88"/>
    </location>
</feature>
<feature type="binding site" description="via phosphate group" evidence="1">
    <location>
        <position position="88"/>
    </location>
    <ligand>
        <name>Mg(2+)</name>
        <dbReference type="ChEBI" id="CHEBI:18420"/>
    </ligand>
</feature>
<feature type="binding site" evidence="1">
    <location>
        <position position="231"/>
    </location>
    <ligand>
        <name>Mg(2+)</name>
        <dbReference type="ChEBI" id="CHEBI:18420"/>
    </ligand>
</feature>
<feature type="binding site" evidence="1">
    <location>
        <position position="233"/>
    </location>
    <ligand>
        <name>Mg(2+)</name>
        <dbReference type="ChEBI" id="CHEBI:18420"/>
    </ligand>
</feature>
<feature type="binding site" evidence="1">
    <location>
        <position position="235"/>
    </location>
    <ligand>
        <name>Mg(2+)</name>
        <dbReference type="ChEBI" id="CHEBI:18420"/>
    </ligand>
</feature>
<feature type="modified residue" description="Phosphoserine" evidence="1">
    <location>
        <position position="88"/>
    </location>
</feature>
<protein>
    <recommendedName>
        <fullName evidence="1">Phosphoglucosamine mutase</fullName>
        <ecNumber evidence="1">5.4.2.10</ecNumber>
    </recommendedName>
</protein>
<dbReference type="EC" id="5.4.2.10" evidence="1"/>
<dbReference type="EMBL" id="CP000742">
    <property type="protein sequence ID" value="ABR54308.1"/>
    <property type="molecule type" value="Genomic_DNA"/>
</dbReference>
<dbReference type="RefSeq" id="WP_011972211.1">
    <property type="nucleotide sequence ID" value="NC_009634.1"/>
</dbReference>
<dbReference type="SMR" id="A6UP86"/>
<dbReference type="STRING" id="406327.Mevan_0400"/>
<dbReference type="GeneID" id="5325641"/>
<dbReference type="KEGG" id="mvn:Mevan_0400"/>
<dbReference type="eggNOG" id="arCOG00767">
    <property type="taxonomic scope" value="Archaea"/>
</dbReference>
<dbReference type="HOGENOM" id="CLU_016950_7_1_2"/>
<dbReference type="OrthoDB" id="10363at2157"/>
<dbReference type="Proteomes" id="UP000001107">
    <property type="component" value="Chromosome"/>
</dbReference>
<dbReference type="GO" id="GO:0000287">
    <property type="term" value="F:magnesium ion binding"/>
    <property type="evidence" value="ECO:0007669"/>
    <property type="project" value="UniProtKB-UniRule"/>
</dbReference>
<dbReference type="GO" id="GO:0008966">
    <property type="term" value="F:phosphoglucosamine mutase activity"/>
    <property type="evidence" value="ECO:0007669"/>
    <property type="project" value="UniProtKB-UniRule"/>
</dbReference>
<dbReference type="GO" id="GO:0005975">
    <property type="term" value="P:carbohydrate metabolic process"/>
    <property type="evidence" value="ECO:0007669"/>
    <property type="project" value="InterPro"/>
</dbReference>
<dbReference type="CDD" id="cd03087">
    <property type="entry name" value="PGM_like1"/>
    <property type="match status" value="1"/>
</dbReference>
<dbReference type="FunFam" id="3.40.120.10:FF:000002">
    <property type="entry name" value="Phosphoglucosamine mutase"/>
    <property type="match status" value="1"/>
</dbReference>
<dbReference type="FunFam" id="3.30.310.50:FF:000009">
    <property type="entry name" value="Probable phosphoglucosamine mutase"/>
    <property type="match status" value="1"/>
</dbReference>
<dbReference type="Gene3D" id="3.40.120.10">
    <property type="entry name" value="Alpha-D-Glucose-1,6-Bisphosphate, subunit A, domain 3"/>
    <property type="match status" value="3"/>
</dbReference>
<dbReference type="Gene3D" id="3.30.310.50">
    <property type="entry name" value="Alpha-D-phosphohexomutase, C-terminal domain"/>
    <property type="match status" value="1"/>
</dbReference>
<dbReference type="HAMAP" id="MF_01554_A">
    <property type="entry name" value="GlmM_A"/>
    <property type="match status" value="1"/>
</dbReference>
<dbReference type="InterPro" id="IPR005844">
    <property type="entry name" value="A-D-PHexomutase_a/b/a-I"/>
</dbReference>
<dbReference type="InterPro" id="IPR016055">
    <property type="entry name" value="A-D-PHexomutase_a/b/a-I/II/III"/>
</dbReference>
<dbReference type="InterPro" id="IPR005845">
    <property type="entry name" value="A-D-PHexomutase_a/b/a-II"/>
</dbReference>
<dbReference type="InterPro" id="IPR005846">
    <property type="entry name" value="A-D-PHexomutase_a/b/a-III"/>
</dbReference>
<dbReference type="InterPro" id="IPR005843">
    <property type="entry name" value="A-D-PHexomutase_C"/>
</dbReference>
<dbReference type="InterPro" id="IPR036900">
    <property type="entry name" value="A-D-PHexomutase_C_sf"/>
</dbReference>
<dbReference type="InterPro" id="IPR016066">
    <property type="entry name" value="A-D-PHexomutase_CS"/>
</dbReference>
<dbReference type="InterPro" id="IPR005841">
    <property type="entry name" value="Alpha-D-phosphohexomutase_SF"/>
</dbReference>
<dbReference type="InterPro" id="IPR023666">
    <property type="entry name" value="GlmM_arc"/>
</dbReference>
<dbReference type="InterPro" id="IPR024086">
    <property type="entry name" value="GlmM_arc-type"/>
</dbReference>
<dbReference type="NCBIfam" id="TIGR03990">
    <property type="entry name" value="Arch_GlmM"/>
    <property type="match status" value="1"/>
</dbReference>
<dbReference type="PANTHER" id="PTHR43771">
    <property type="entry name" value="PHOSPHOMANNOMUTASE"/>
    <property type="match status" value="1"/>
</dbReference>
<dbReference type="PANTHER" id="PTHR43771:SF1">
    <property type="entry name" value="PHOSPHOMANNOMUTASE"/>
    <property type="match status" value="1"/>
</dbReference>
<dbReference type="Pfam" id="PF02878">
    <property type="entry name" value="PGM_PMM_I"/>
    <property type="match status" value="1"/>
</dbReference>
<dbReference type="Pfam" id="PF02879">
    <property type="entry name" value="PGM_PMM_II"/>
    <property type="match status" value="1"/>
</dbReference>
<dbReference type="Pfam" id="PF02880">
    <property type="entry name" value="PGM_PMM_III"/>
    <property type="match status" value="1"/>
</dbReference>
<dbReference type="Pfam" id="PF00408">
    <property type="entry name" value="PGM_PMM_IV"/>
    <property type="match status" value="1"/>
</dbReference>
<dbReference type="PRINTS" id="PR00509">
    <property type="entry name" value="PGMPMM"/>
</dbReference>
<dbReference type="SUPFAM" id="SSF55957">
    <property type="entry name" value="Phosphoglucomutase, C-terminal domain"/>
    <property type="match status" value="1"/>
</dbReference>
<dbReference type="SUPFAM" id="SSF53738">
    <property type="entry name" value="Phosphoglucomutase, first 3 domains"/>
    <property type="match status" value="3"/>
</dbReference>
<dbReference type="PROSITE" id="PS00710">
    <property type="entry name" value="PGM_PMM"/>
    <property type="match status" value="1"/>
</dbReference>